<accession>O22773</accession>
<accession>Q0WWR3</accession>
<accession>Q8L985</accession>
<accession>Q94BU6</accession>
<accession>Q9M110</accession>
<gene>
    <name type="ordered locus">At4g02530</name>
    <name type="ORF">T10P11.17</name>
</gene>
<organism>
    <name type="scientific">Arabidopsis thaliana</name>
    <name type="common">Mouse-ear cress</name>
    <dbReference type="NCBI Taxonomy" id="3702"/>
    <lineage>
        <taxon>Eukaryota</taxon>
        <taxon>Viridiplantae</taxon>
        <taxon>Streptophyta</taxon>
        <taxon>Embryophyta</taxon>
        <taxon>Tracheophyta</taxon>
        <taxon>Spermatophyta</taxon>
        <taxon>Magnoliopsida</taxon>
        <taxon>eudicotyledons</taxon>
        <taxon>Gunneridae</taxon>
        <taxon>Pentapetalae</taxon>
        <taxon>rosids</taxon>
        <taxon>malvids</taxon>
        <taxon>Brassicales</taxon>
        <taxon>Brassicaceae</taxon>
        <taxon>Camelineae</taxon>
        <taxon>Arabidopsis</taxon>
    </lineage>
</organism>
<evidence type="ECO:0000255" key="1"/>
<evidence type="ECO:0000269" key="2">
    <source>
    </source>
</evidence>
<evidence type="ECO:0000269" key="3">
    <source>
    </source>
</evidence>
<evidence type="ECO:0000269" key="4">
    <source>
    </source>
</evidence>
<evidence type="ECO:0000305" key="5"/>
<protein>
    <recommendedName>
        <fullName>Thylakoid lumenal 16.5 kDa protein, chloroplastic</fullName>
    </recommendedName>
</protein>
<dbReference type="EMBL" id="AC002330">
    <property type="protein sequence ID" value="AAC78263.1"/>
    <property type="status" value="ALT_SEQ"/>
    <property type="molecule type" value="Genomic_DNA"/>
</dbReference>
<dbReference type="EMBL" id="AL161494">
    <property type="protein sequence ID" value="CAB80746.1"/>
    <property type="status" value="ALT_SEQ"/>
    <property type="molecule type" value="Genomic_DNA"/>
</dbReference>
<dbReference type="EMBL" id="CP002687">
    <property type="protein sequence ID" value="AEE82184.1"/>
    <property type="molecule type" value="Genomic_DNA"/>
</dbReference>
<dbReference type="EMBL" id="AY039885">
    <property type="protein sequence ID" value="AAK63989.1"/>
    <property type="molecule type" value="mRNA"/>
</dbReference>
<dbReference type="EMBL" id="AY081737">
    <property type="protein sequence ID" value="AAL87390.1"/>
    <property type="molecule type" value="mRNA"/>
</dbReference>
<dbReference type="EMBL" id="AY088583">
    <property type="protein sequence ID" value="AAM66113.1"/>
    <property type="molecule type" value="mRNA"/>
</dbReference>
<dbReference type="EMBL" id="AK226276">
    <property type="protein sequence ID" value="BAE98435.1"/>
    <property type="molecule type" value="mRNA"/>
</dbReference>
<dbReference type="PIR" id="T01096">
    <property type="entry name" value="T01096"/>
</dbReference>
<dbReference type="RefSeq" id="NP_001319849.1">
    <property type="nucleotide sequence ID" value="NM_001340386.1"/>
</dbReference>
<dbReference type="SMR" id="O22773"/>
<dbReference type="FunCoup" id="O22773">
    <property type="interactions" value="1544"/>
</dbReference>
<dbReference type="STRING" id="3702.O22773"/>
<dbReference type="PaxDb" id="3702-AT4G02530.1"/>
<dbReference type="ProteomicsDB" id="234319"/>
<dbReference type="EnsemblPlants" id="AT4G02530.1">
    <property type="protein sequence ID" value="AT4G02530.1"/>
    <property type="gene ID" value="AT4G02530"/>
</dbReference>
<dbReference type="GeneID" id="827927"/>
<dbReference type="Gramene" id="AT4G02530.1">
    <property type="protein sequence ID" value="AT4G02530.1"/>
    <property type="gene ID" value="AT4G02530"/>
</dbReference>
<dbReference type="KEGG" id="ath:AT4G02530"/>
<dbReference type="Araport" id="AT4G02530"/>
<dbReference type="TAIR" id="AT4G02530">
    <property type="gene designation" value="MPH2"/>
</dbReference>
<dbReference type="eggNOG" id="ENOG502QTFN">
    <property type="taxonomic scope" value="Eukaryota"/>
</dbReference>
<dbReference type="HOGENOM" id="CLU_092940_0_0_1"/>
<dbReference type="InParanoid" id="O22773"/>
<dbReference type="PhylomeDB" id="O22773"/>
<dbReference type="PRO" id="PR:O22773"/>
<dbReference type="Proteomes" id="UP000006548">
    <property type="component" value="Chromosome 4"/>
</dbReference>
<dbReference type="ExpressionAtlas" id="O22773">
    <property type="expression patterns" value="baseline and differential"/>
</dbReference>
<dbReference type="GO" id="GO:0009507">
    <property type="term" value="C:chloroplast"/>
    <property type="evidence" value="ECO:0007005"/>
    <property type="project" value="TAIR"/>
</dbReference>
<dbReference type="GO" id="GO:0009941">
    <property type="term" value="C:chloroplast envelope"/>
    <property type="evidence" value="ECO:0007005"/>
    <property type="project" value="TAIR"/>
</dbReference>
<dbReference type="GO" id="GO:0009570">
    <property type="term" value="C:chloroplast stroma"/>
    <property type="evidence" value="ECO:0007005"/>
    <property type="project" value="TAIR"/>
</dbReference>
<dbReference type="GO" id="GO:0009534">
    <property type="term" value="C:chloroplast thylakoid"/>
    <property type="evidence" value="ECO:0007005"/>
    <property type="project" value="TAIR"/>
</dbReference>
<dbReference type="GO" id="GO:0009543">
    <property type="term" value="C:chloroplast thylakoid lumen"/>
    <property type="evidence" value="ECO:0000314"/>
    <property type="project" value="TAIR"/>
</dbReference>
<dbReference type="GO" id="GO:0009535">
    <property type="term" value="C:chloroplast thylakoid membrane"/>
    <property type="evidence" value="ECO:0007005"/>
    <property type="project" value="TAIR"/>
</dbReference>
<dbReference type="GO" id="GO:0005829">
    <property type="term" value="C:cytosol"/>
    <property type="evidence" value="ECO:0007005"/>
    <property type="project" value="TAIR"/>
</dbReference>
<dbReference type="GO" id="GO:0009579">
    <property type="term" value="C:thylakoid"/>
    <property type="evidence" value="ECO:0007005"/>
    <property type="project" value="TAIR"/>
</dbReference>
<dbReference type="GO" id="GO:0031977">
    <property type="term" value="C:thylakoid lumen"/>
    <property type="evidence" value="ECO:0007005"/>
    <property type="project" value="TAIR"/>
</dbReference>
<dbReference type="GO" id="GO:0010206">
    <property type="term" value="P:photosystem II repair"/>
    <property type="evidence" value="ECO:0000315"/>
    <property type="project" value="TAIR"/>
</dbReference>
<dbReference type="InterPro" id="IPR038862">
    <property type="entry name" value="MPH2"/>
</dbReference>
<dbReference type="InterPro" id="IPR049072">
    <property type="entry name" value="MPH2_C"/>
</dbReference>
<dbReference type="PANTHER" id="PTHR35742">
    <property type="entry name" value="THYLAKOID LUMENAL 16.5 KDA PROTEIN, CHLOROPLASTIC"/>
    <property type="match status" value="1"/>
</dbReference>
<dbReference type="PANTHER" id="PTHR35742:SF1">
    <property type="entry name" value="THYLAKOID LUMENAL 16.5 KDA PROTEIN, CHLOROPLASTIC"/>
    <property type="match status" value="1"/>
</dbReference>
<dbReference type="Pfam" id="PF20675">
    <property type="entry name" value="MPH2"/>
    <property type="match status" value="1"/>
</dbReference>
<reference key="1">
    <citation type="journal article" date="1999" name="Nature">
        <title>Sequence and analysis of chromosome 4 of the plant Arabidopsis thaliana.</title>
        <authorList>
            <person name="Mayer K.F.X."/>
            <person name="Schueller C."/>
            <person name="Wambutt R."/>
            <person name="Murphy G."/>
            <person name="Volckaert G."/>
            <person name="Pohl T."/>
            <person name="Duesterhoeft A."/>
            <person name="Stiekema W."/>
            <person name="Entian K.-D."/>
            <person name="Terryn N."/>
            <person name="Harris B."/>
            <person name="Ansorge W."/>
            <person name="Brandt P."/>
            <person name="Grivell L.A."/>
            <person name="Rieger M."/>
            <person name="Weichselgartner M."/>
            <person name="de Simone V."/>
            <person name="Obermaier B."/>
            <person name="Mache R."/>
            <person name="Mueller M."/>
            <person name="Kreis M."/>
            <person name="Delseny M."/>
            <person name="Puigdomenech P."/>
            <person name="Watson M."/>
            <person name="Schmidtheini T."/>
            <person name="Reichert B."/>
            <person name="Portetelle D."/>
            <person name="Perez-Alonso M."/>
            <person name="Boutry M."/>
            <person name="Bancroft I."/>
            <person name="Vos P."/>
            <person name="Hoheisel J."/>
            <person name="Zimmermann W."/>
            <person name="Wedler H."/>
            <person name="Ridley P."/>
            <person name="Langham S.-A."/>
            <person name="McCullagh B."/>
            <person name="Bilham L."/>
            <person name="Robben J."/>
            <person name="van der Schueren J."/>
            <person name="Grymonprez B."/>
            <person name="Chuang Y.-J."/>
            <person name="Vandenbussche F."/>
            <person name="Braeken M."/>
            <person name="Weltjens I."/>
            <person name="Voet M."/>
            <person name="Bastiaens I."/>
            <person name="Aert R."/>
            <person name="Defoor E."/>
            <person name="Weitzenegger T."/>
            <person name="Bothe G."/>
            <person name="Ramsperger U."/>
            <person name="Hilbert H."/>
            <person name="Braun M."/>
            <person name="Holzer E."/>
            <person name="Brandt A."/>
            <person name="Peters S."/>
            <person name="van Staveren M."/>
            <person name="Dirkse W."/>
            <person name="Mooijman P."/>
            <person name="Klein Lankhorst R."/>
            <person name="Rose M."/>
            <person name="Hauf J."/>
            <person name="Koetter P."/>
            <person name="Berneiser S."/>
            <person name="Hempel S."/>
            <person name="Feldpausch M."/>
            <person name="Lamberth S."/>
            <person name="Van den Daele H."/>
            <person name="De Keyser A."/>
            <person name="Buysshaert C."/>
            <person name="Gielen J."/>
            <person name="Villarroel R."/>
            <person name="De Clercq R."/>
            <person name="van Montagu M."/>
            <person name="Rogers J."/>
            <person name="Cronin A."/>
            <person name="Quail M.A."/>
            <person name="Bray-Allen S."/>
            <person name="Clark L."/>
            <person name="Doggett J."/>
            <person name="Hall S."/>
            <person name="Kay M."/>
            <person name="Lennard N."/>
            <person name="McLay K."/>
            <person name="Mayes R."/>
            <person name="Pettett A."/>
            <person name="Rajandream M.A."/>
            <person name="Lyne M."/>
            <person name="Benes V."/>
            <person name="Rechmann S."/>
            <person name="Borkova D."/>
            <person name="Bloecker H."/>
            <person name="Scharfe M."/>
            <person name="Grimm M."/>
            <person name="Loehnert T.-H."/>
            <person name="Dose S."/>
            <person name="de Haan M."/>
            <person name="Maarse A.C."/>
            <person name="Schaefer M."/>
            <person name="Mueller-Auer S."/>
            <person name="Gabel C."/>
            <person name="Fuchs M."/>
            <person name="Fartmann B."/>
            <person name="Granderath K."/>
            <person name="Dauner D."/>
            <person name="Herzl A."/>
            <person name="Neumann S."/>
            <person name="Argiriou A."/>
            <person name="Vitale D."/>
            <person name="Liguori R."/>
            <person name="Piravandi E."/>
            <person name="Massenet O."/>
            <person name="Quigley F."/>
            <person name="Clabauld G."/>
            <person name="Muendlein A."/>
            <person name="Felber R."/>
            <person name="Schnabl S."/>
            <person name="Hiller R."/>
            <person name="Schmidt W."/>
            <person name="Lecharny A."/>
            <person name="Aubourg S."/>
            <person name="Chefdor F."/>
            <person name="Cooke R."/>
            <person name="Berger C."/>
            <person name="Monfort A."/>
            <person name="Casacuberta E."/>
            <person name="Gibbons T."/>
            <person name="Weber N."/>
            <person name="Vandenbol M."/>
            <person name="Bargues M."/>
            <person name="Terol J."/>
            <person name="Torres A."/>
            <person name="Perez-Perez A."/>
            <person name="Purnelle B."/>
            <person name="Bent E."/>
            <person name="Johnson S."/>
            <person name="Tacon D."/>
            <person name="Jesse T."/>
            <person name="Heijnen L."/>
            <person name="Schwarz S."/>
            <person name="Scholler P."/>
            <person name="Heber S."/>
            <person name="Francs P."/>
            <person name="Bielke C."/>
            <person name="Frishman D."/>
            <person name="Haase D."/>
            <person name="Lemcke K."/>
            <person name="Mewes H.-W."/>
            <person name="Stocker S."/>
            <person name="Zaccaria P."/>
            <person name="Bevan M."/>
            <person name="Wilson R.K."/>
            <person name="de la Bastide M."/>
            <person name="Habermann K."/>
            <person name="Parnell L."/>
            <person name="Dedhia N."/>
            <person name="Gnoj L."/>
            <person name="Schutz K."/>
            <person name="Huang E."/>
            <person name="Spiegel L."/>
            <person name="Sekhon M."/>
            <person name="Murray J."/>
            <person name="Sheet P."/>
            <person name="Cordes M."/>
            <person name="Abu-Threideh J."/>
            <person name="Stoneking T."/>
            <person name="Kalicki J."/>
            <person name="Graves T."/>
            <person name="Harmon G."/>
            <person name="Edwards J."/>
            <person name="Latreille P."/>
            <person name="Courtney L."/>
            <person name="Cloud J."/>
            <person name="Abbott A."/>
            <person name="Scott K."/>
            <person name="Johnson D."/>
            <person name="Minx P."/>
            <person name="Bentley D."/>
            <person name="Fulton B."/>
            <person name="Miller N."/>
            <person name="Greco T."/>
            <person name="Kemp K."/>
            <person name="Kramer J."/>
            <person name="Fulton L."/>
            <person name="Mardis E."/>
            <person name="Dante M."/>
            <person name="Pepin K."/>
            <person name="Hillier L.W."/>
            <person name="Nelson J."/>
            <person name="Spieth J."/>
            <person name="Ryan E."/>
            <person name="Andrews S."/>
            <person name="Geisel C."/>
            <person name="Layman D."/>
            <person name="Du H."/>
            <person name="Ali J."/>
            <person name="Berghoff A."/>
            <person name="Jones K."/>
            <person name="Drone K."/>
            <person name="Cotton M."/>
            <person name="Joshu C."/>
            <person name="Antonoiu B."/>
            <person name="Zidanic M."/>
            <person name="Strong C."/>
            <person name="Sun H."/>
            <person name="Lamar B."/>
            <person name="Yordan C."/>
            <person name="Ma P."/>
            <person name="Zhong J."/>
            <person name="Preston R."/>
            <person name="Vil D."/>
            <person name="Shekher M."/>
            <person name="Matero A."/>
            <person name="Shah R."/>
            <person name="Swaby I.K."/>
            <person name="O'Shaughnessy A."/>
            <person name="Rodriguez M."/>
            <person name="Hoffman J."/>
            <person name="Till S."/>
            <person name="Granat S."/>
            <person name="Shohdy N."/>
            <person name="Hasegawa A."/>
            <person name="Hameed A."/>
            <person name="Lodhi M."/>
            <person name="Johnson A."/>
            <person name="Chen E."/>
            <person name="Marra M.A."/>
            <person name="Martienssen R."/>
            <person name="McCombie W.R."/>
        </authorList>
    </citation>
    <scope>NUCLEOTIDE SEQUENCE [LARGE SCALE GENOMIC DNA]</scope>
    <source>
        <strain>cv. Columbia</strain>
    </source>
</reference>
<reference key="2">
    <citation type="journal article" date="2017" name="Plant J.">
        <title>Araport11: a complete reannotation of the Arabidopsis thaliana reference genome.</title>
        <authorList>
            <person name="Cheng C.Y."/>
            <person name="Krishnakumar V."/>
            <person name="Chan A.P."/>
            <person name="Thibaud-Nissen F."/>
            <person name="Schobel S."/>
            <person name="Town C.D."/>
        </authorList>
    </citation>
    <scope>GENOME REANNOTATION</scope>
    <source>
        <strain>cv. Columbia</strain>
    </source>
</reference>
<reference key="3">
    <citation type="journal article" date="1999" name="Planta">
        <title>Characterisation of an Arabidopsis thaliana cDNA encoding a novel thylakoid lumen protein imported by the delta pH-dependent pathway.</title>
        <authorList>
            <person name="Mant A."/>
            <person name="Kieselbach T."/>
            <person name="Schroeder W.P."/>
            <person name="Robinson C."/>
        </authorList>
    </citation>
    <scope>SEQUENCE REVISION TO N-TERMINUS</scope>
    <scope>CHARACTERIZATION</scope>
</reference>
<reference key="4">
    <citation type="journal article" date="2003" name="Science">
        <title>Empirical analysis of transcriptional activity in the Arabidopsis genome.</title>
        <authorList>
            <person name="Yamada K."/>
            <person name="Lim J."/>
            <person name="Dale J.M."/>
            <person name="Chen H."/>
            <person name="Shinn P."/>
            <person name="Palm C.J."/>
            <person name="Southwick A.M."/>
            <person name="Wu H.C."/>
            <person name="Kim C.J."/>
            <person name="Nguyen M."/>
            <person name="Pham P.K."/>
            <person name="Cheuk R.F."/>
            <person name="Karlin-Newmann G."/>
            <person name="Liu S.X."/>
            <person name="Lam B."/>
            <person name="Sakano H."/>
            <person name="Wu T."/>
            <person name="Yu G."/>
            <person name="Miranda M."/>
            <person name="Quach H.L."/>
            <person name="Tripp M."/>
            <person name="Chang C.H."/>
            <person name="Lee J.M."/>
            <person name="Toriumi M.J."/>
            <person name="Chan M.M."/>
            <person name="Tang C.C."/>
            <person name="Onodera C.S."/>
            <person name="Deng J.M."/>
            <person name="Akiyama K."/>
            <person name="Ansari Y."/>
            <person name="Arakawa T."/>
            <person name="Banh J."/>
            <person name="Banno F."/>
            <person name="Bowser L."/>
            <person name="Brooks S.Y."/>
            <person name="Carninci P."/>
            <person name="Chao Q."/>
            <person name="Choy N."/>
            <person name="Enju A."/>
            <person name="Goldsmith A.D."/>
            <person name="Gurjal M."/>
            <person name="Hansen N.F."/>
            <person name="Hayashizaki Y."/>
            <person name="Johnson-Hopson C."/>
            <person name="Hsuan V.W."/>
            <person name="Iida K."/>
            <person name="Karnes M."/>
            <person name="Khan S."/>
            <person name="Koesema E."/>
            <person name="Ishida J."/>
            <person name="Jiang P.X."/>
            <person name="Jones T."/>
            <person name="Kawai J."/>
            <person name="Kamiya A."/>
            <person name="Meyers C."/>
            <person name="Nakajima M."/>
            <person name="Narusaka M."/>
            <person name="Seki M."/>
            <person name="Sakurai T."/>
            <person name="Satou M."/>
            <person name="Tamse R."/>
            <person name="Vaysberg M."/>
            <person name="Wallender E.K."/>
            <person name="Wong C."/>
            <person name="Yamamura Y."/>
            <person name="Yuan S."/>
            <person name="Shinozaki K."/>
            <person name="Davis R.W."/>
            <person name="Theologis A."/>
            <person name="Ecker J.R."/>
        </authorList>
    </citation>
    <scope>NUCLEOTIDE SEQUENCE [LARGE SCALE MRNA]</scope>
    <source>
        <strain>cv. Columbia</strain>
    </source>
</reference>
<reference key="5">
    <citation type="submission" date="2002-03" db="EMBL/GenBank/DDBJ databases">
        <title>Full-length cDNA from Arabidopsis thaliana.</title>
        <authorList>
            <person name="Brover V.V."/>
            <person name="Troukhan M.E."/>
            <person name="Alexandrov N.A."/>
            <person name="Lu Y.-P."/>
            <person name="Flavell R.B."/>
            <person name="Feldmann K.A."/>
        </authorList>
    </citation>
    <scope>NUCLEOTIDE SEQUENCE [LARGE SCALE MRNA]</scope>
</reference>
<reference key="6">
    <citation type="submission" date="2006-07" db="EMBL/GenBank/DDBJ databases">
        <title>Large-scale analysis of RIKEN Arabidopsis full-length (RAFL) cDNAs.</title>
        <authorList>
            <person name="Totoki Y."/>
            <person name="Seki M."/>
            <person name="Ishida J."/>
            <person name="Nakajima M."/>
            <person name="Enju A."/>
            <person name="Kamiya A."/>
            <person name="Narusaka M."/>
            <person name="Shin-i T."/>
            <person name="Nakagawa M."/>
            <person name="Sakamoto N."/>
            <person name="Oishi K."/>
            <person name="Kohara Y."/>
            <person name="Kobayashi M."/>
            <person name="Toyoda A."/>
            <person name="Sakaki Y."/>
            <person name="Sakurai T."/>
            <person name="Iida K."/>
            <person name="Akiyama K."/>
            <person name="Satou M."/>
            <person name="Toyoda T."/>
            <person name="Konagaya A."/>
            <person name="Carninci P."/>
            <person name="Kawai J."/>
            <person name="Hayashizaki Y."/>
            <person name="Shinozaki K."/>
        </authorList>
    </citation>
    <scope>NUCLEOTIDE SEQUENCE [LARGE SCALE MRNA]</scope>
    <source>
        <strain>cv. Columbia</strain>
    </source>
</reference>
<reference key="7">
    <citation type="journal article" date="2002" name="J. Biol. Chem.">
        <title>Proteome map of the chloroplast lumen of Arabidopsis thaliana.</title>
        <authorList>
            <person name="Schubert M."/>
            <person name="Petersson U.A."/>
            <person name="Haas B.J."/>
            <person name="Funk C."/>
            <person name="Schroeder W.P."/>
            <person name="Kieselbach T."/>
        </authorList>
    </citation>
    <scope>PROTEIN SEQUENCE OF 74-88</scope>
    <scope>SUBCELLULAR LOCATION</scope>
</reference>
<reference key="8">
    <citation type="journal article" date="2002" name="Plant Cell">
        <title>Central functions of the lumenal and peripheral thylakoid proteome of Arabidopsis determined by experimentation and genome-wide prediction.</title>
        <authorList>
            <person name="Peltier J.-B."/>
            <person name="Emanuelsson O."/>
            <person name="Kalume D.E."/>
            <person name="Ytterberg J."/>
            <person name="Friso G."/>
            <person name="Rudella A."/>
            <person name="Liberles D.A."/>
            <person name="Soederberg L."/>
            <person name="Roepstorff P."/>
            <person name="von Heijne G."/>
            <person name="van Wijk K.J."/>
        </authorList>
    </citation>
    <scope>PROTEIN SEQUENCE OF N-TERMINUS</scope>
    <scope>IDENTIFICATION BY MASS SPECTROMETRY</scope>
</reference>
<reference key="9">
    <citation type="journal article" date="2008" name="PLoS ONE">
        <title>Sorting signals, N-terminal modifications and abundance of the chloroplast proteome.</title>
        <authorList>
            <person name="Zybailov B."/>
            <person name="Rutschow H."/>
            <person name="Friso G."/>
            <person name="Rudella A."/>
            <person name="Emanuelsson O."/>
            <person name="Sun Q."/>
            <person name="van Wijk K.J."/>
        </authorList>
    </citation>
    <scope>IDENTIFICATION BY MASS SPECTROMETRY</scope>
    <scope>SUBCELLULAR LOCATION [LARGE SCALE ANALYSIS]</scope>
</reference>
<keyword id="KW-0150">Chloroplast</keyword>
<keyword id="KW-0903">Direct protein sequencing</keyword>
<keyword id="KW-0934">Plastid</keyword>
<keyword id="KW-1185">Reference proteome</keyword>
<keyword id="KW-0793">Thylakoid</keyword>
<keyword id="KW-0809">Transit peptide</keyword>
<proteinExistence type="evidence at protein level"/>
<sequence>MAKSLLCSSTLNPFFSTTLSSSKKNQIAYSGNSKNQTSSSLLWKRRELSLGFMSSLVAIGLVSNDRRRHDANAAILEADDDEELLEKVKQDRKKRIERQAVLNSAVKEKGYLQDLVYKLSKVGQAIENNDLPAAGLVLGKGIDTEWVKTVNLAFTKLSTSPEENTEVEAFNSSLASLITSVNKNDIESSKLAFVSSAGAFEKWTTLTGLLEQLKGL</sequence>
<name>TL16_ARATH</name>
<comment type="subcellular location">
    <subcellularLocation>
        <location evidence="2 4">Plastid</location>
        <location evidence="2 4">Chloroplast thylakoid lumen</location>
    </subcellularLocation>
</comment>
<comment type="sequence caution" evidence="5">
    <conflict type="erroneous gene model prediction">
        <sequence resource="EMBL-CDS" id="AAC78263"/>
    </conflict>
</comment>
<comment type="sequence caution" evidence="5">
    <conflict type="erroneous gene model prediction">
        <sequence resource="EMBL-CDS" id="CAB80746"/>
    </conflict>
</comment>
<feature type="transit peptide" description="Chloroplast" evidence="1">
    <location>
        <begin position="1"/>
        <end position="38"/>
    </location>
</feature>
<feature type="transit peptide" description="Thylakoid" evidence="2 3">
    <location>
        <begin position="39"/>
        <end position="73"/>
    </location>
</feature>
<feature type="chain" id="PRO_0000022534" description="Thylakoid lumenal 16.5 kDa protein, chloroplastic">
    <location>
        <begin position="74"/>
        <end position="216"/>
    </location>
</feature>
<feature type="sequence conflict" description="In Ref. 5; AAM66113." evidence="5" ref="5">
    <original>T</original>
    <variation>A</variation>
    <location>
        <position position="17"/>
    </location>
</feature>
<feature type="sequence conflict" description="In Ref. 5; AAM66113." evidence="5" ref="5">
    <original>I</original>
    <variation>N</variation>
    <location>
        <position position="142"/>
    </location>
</feature>